<keyword id="KW-0596">Phosphopantetheine</keyword>
<keyword id="KW-0597">Phosphoprotein</keyword>
<keyword id="KW-0808">Transferase</keyword>
<proteinExistence type="evidence at protein level"/>
<organism>
    <name type="scientific">Paxillus involutus</name>
    <name type="common">Naked brimcap</name>
    <dbReference type="NCBI Taxonomy" id="71150"/>
    <lineage>
        <taxon>Eukaryota</taxon>
        <taxon>Fungi</taxon>
        <taxon>Dikarya</taxon>
        <taxon>Basidiomycota</taxon>
        <taxon>Agaricomycotina</taxon>
        <taxon>Agaricomycetes</taxon>
        <taxon>Agaricomycetidae</taxon>
        <taxon>Boletales</taxon>
        <taxon>Paxilineae</taxon>
        <taxon>Paxillaceae</taxon>
        <taxon>Paxillus</taxon>
    </lineage>
</organism>
<feature type="chain" id="PRO_0000442625" description="Atromentin synthetase invA5">
    <location>
        <begin position="1"/>
        <end position="953"/>
    </location>
</feature>
<feature type="domain" description="Carrier" evidence="3">
    <location>
        <begin position="592"/>
        <end position="670"/>
    </location>
</feature>
<feature type="region of interest" description="Adenylation (A) domain" evidence="2">
    <location>
        <begin position="37"/>
        <end position="460"/>
    </location>
</feature>
<feature type="region of interest" description="Thiolation and peptide carrier (T) domain" evidence="2">
    <location>
        <begin position="597"/>
        <end position="667"/>
    </location>
</feature>
<feature type="region of interest" description="Thioesterase (TE) domain" evidence="2">
    <location>
        <begin position="693"/>
        <end position="795"/>
    </location>
</feature>
<feature type="modified residue" description="O-(pantetheine 4'-phosphoryl)serine" evidence="3">
    <location>
        <position position="629"/>
    </location>
</feature>
<dbReference type="EC" id="2.3.1.-"/>
<dbReference type="EMBL" id="KT958233">
    <property type="protein sequence ID" value="ALN66885.1"/>
    <property type="molecule type" value="mRNA"/>
</dbReference>
<dbReference type="SMR" id="A0A0S2E7W7"/>
<dbReference type="ESTHER" id="paxin-inva5">
    <property type="family name" value="Thioesterase"/>
</dbReference>
<dbReference type="GO" id="GO:0016878">
    <property type="term" value="F:acid-thiol ligase activity"/>
    <property type="evidence" value="ECO:0007669"/>
    <property type="project" value="UniProtKB-ARBA"/>
</dbReference>
<dbReference type="GO" id="GO:0016740">
    <property type="term" value="F:transferase activity"/>
    <property type="evidence" value="ECO:0007669"/>
    <property type="project" value="UniProtKB-KW"/>
</dbReference>
<dbReference type="GO" id="GO:0009058">
    <property type="term" value="P:biosynthetic process"/>
    <property type="evidence" value="ECO:0007669"/>
    <property type="project" value="InterPro"/>
</dbReference>
<dbReference type="Gene3D" id="3.30.300.30">
    <property type="match status" value="1"/>
</dbReference>
<dbReference type="Gene3D" id="1.10.1200.10">
    <property type="entry name" value="ACP-like"/>
    <property type="match status" value="1"/>
</dbReference>
<dbReference type="Gene3D" id="3.40.50.1820">
    <property type="entry name" value="alpha/beta hydrolase"/>
    <property type="match status" value="1"/>
</dbReference>
<dbReference type="Gene3D" id="3.40.50.12780">
    <property type="entry name" value="N-terminal domain of ligase-like"/>
    <property type="match status" value="1"/>
</dbReference>
<dbReference type="InterPro" id="IPR029058">
    <property type="entry name" value="AB_hydrolase_fold"/>
</dbReference>
<dbReference type="InterPro" id="IPR036736">
    <property type="entry name" value="ACP-like_sf"/>
</dbReference>
<dbReference type="InterPro" id="IPR045851">
    <property type="entry name" value="AMP-bd_C_sf"/>
</dbReference>
<dbReference type="InterPro" id="IPR020845">
    <property type="entry name" value="AMP-binding_CS"/>
</dbReference>
<dbReference type="InterPro" id="IPR000873">
    <property type="entry name" value="AMP-dep_synth/lig_dom"/>
</dbReference>
<dbReference type="InterPro" id="IPR042099">
    <property type="entry name" value="ANL_N_sf"/>
</dbReference>
<dbReference type="InterPro" id="IPR050237">
    <property type="entry name" value="ATP-dep_AMP-bd_enzyme"/>
</dbReference>
<dbReference type="InterPro" id="IPR020802">
    <property type="entry name" value="PKS_thioesterase"/>
</dbReference>
<dbReference type="InterPro" id="IPR009081">
    <property type="entry name" value="PP-bd_ACP"/>
</dbReference>
<dbReference type="InterPro" id="IPR001031">
    <property type="entry name" value="Thioesterase"/>
</dbReference>
<dbReference type="PANTHER" id="PTHR43767">
    <property type="entry name" value="LONG-CHAIN-FATTY-ACID--COA LIGASE"/>
    <property type="match status" value="1"/>
</dbReference>
<dbReference type="PANTHER" id="PTHR43767:SF1">
    <property type="entry name" value="NONRIBOSOMAL PEPTIDE SYNTHASE PES1 (EUROFUNG)-RELATED"/>
    <property type="match status" value="1"/>
</dbReference>
<dbReference type="Pfam" id="PF00501">
    <property type="entry name" value="AMP-binding"/>
    <property type="match status" value="1"/>
</dbReference>
<dbReference type="Pfam" id="PF00550">
    <property type="entry name" value="PP-binding"/>
    <property type="match status" value="1"/>
</dbReference>
<dbReference type="Pfam" id="PF00975">
    <property type="entry name" value="Thioesterase"/>
    <property type="match status" value="1"/>
</dbReference>
<dbReference type="SMART" id="SM00824">
    <property type="entry name" value="PKS_TE"/>
    <property type="match status" value="1"/>
</dbReference>
<dbReference type="SUPFAM" id="SSF56801">
    <property type="entry name" value="Acetyl-CoA synthetase-like"/>
    <property type="match status" value="1"/>
</dbReference>
<dbReference type="SUPFAM" id="SSF47336">
    <property type="entry name" value="ACP-like"/>
    <property type="match status" value="1"/>
</dbReference>
<dbReference type="SUPFAM" id="SSF53474">
    <property type="entry name" value="alpha/beta-Hydrolases"/>
    <property type="match status" value="1"/>
</dbReference>
<dbReference type="PROSITE" id="PS00455">
    <property type="entry name" value="AMP_BINDING"/>
    <property type="match status" value="1"/>
</dbReference>
<dbReference type="PROSITE" id="PS50075">
    <property type="entry name" value="CARRIER"/>
    <property type="match status" value="1"/>
</dbReference>
<comment type="function">
    <text evidence="4">An L-tyrosine:2-oxoglutarate aminotransferase (probably invD) and atromentin synthetase invA5 catalyze consecutive steps to turn over L-tyrosine into atromentin, which represents the generic precursor molecule for the entire terphenylquinone and pulvinic acid family of pigments, which are widely distributed secondary metabolites in homobasidiomycetes. The first step catalyzed by the aminotransferase converts L-tyrosine in to 4-hydroxyphenylpyruvate (4-HPP). Adenylation of two 4-HPP monomers by the invA5 adenylation (A) domain, covalent tethering of the monomers as a thioester and oxoester onto the invA5 thiolation (T) and thioesterase (TE) domains, respectively, and symmetric C-C-bond formation between two monomers catalyzed by the invA5 TE domain leads to atromentin.</text>
</comment>
<comment type="biophysicochemical properties">
    <phDependence>
        <text evidence="4">Optimum pH is 7.4.</text>
    </phDependence>
    <temperatureDependence>
        <text evidence="4">Optimum temperature is 25 degrees Celsius.</text>
    </temperatureDependence>
</comment>
<comment type="pathway">
    <text evidence="1">Secondary metabolite biosynthesis.</text>
</comment>
<comment type="similarity">
    <text evidence="5">Belongs to the ATP-dependent AMP-binding enzyme family.</text>
</comment>
<reference key="1">
    <citation type="journal article" date="2015" name="Chem. Biol.">
        <title>Three redundant synthetases secure redox-active pigment production in the basidiomycete Paxillus involutus.</title>
        <authorList>
            <person name="Braesel J."/>
            <person name="Gotze S."/>
            <person name="Shah F."/>
            <person name="Heine D."/>
            <person name="Tauber J."/>
            <person name="Hertweck C."/>
            <person name="Tunlid A."/>
            <person name="Stallforth P."/>
            <person name="Hoffmeister D."/>
        </authorList>
    </citation>
    <scope>NUCLEOTIDE SEQUENCE [MRNA]</scope>
    <scope>FUNCTION</scope>
    <scope>BIOPHYSICOCHEMICAL PROPERTIES</scope>
    <source>
        <strain>ATCC MYA-4647</strain>
    </source>
</reference>
<sequence>MTPIAITPVAPVDIIYDLKHTERATESSPVTLLDVFSRAVSQYPDHELSFITSSAHDSTVHTKTFAEFNQHVHALAQAMRAWGKPTGSVIVVYLTEHEDNMAAVWASLLAGYVPCLQPALSAQQAHKEGHVGHIKNLFSSATWLTNESGAEQVQSISGLDIHLLSELKASAEAGVDFQAHQPNPDDEAILFLTSGSTGFSKAVVHTHRTILAACHAKGESYGLTSESKIMNWVGFDHVAGSLEMHIAPLLYGASQLHVHASAILSDPLRFLHLIEEKSIQLAFAPNFLLAKLTRDLEKRSDLFGKFDLSSIKRINSGGEAVVSSTAQAFARTLQNLAKDGDASFVISAGFGMTETCAGCIYDPINVLETPPSYEFLELGTPVAGCEMRIVNPEDGVTPRPDGESGELQVRGPMVFVRYYNNPEATSSSFVEGGWYRTGDVGIVEQGKMRLSGRIKDTVIVHGVSYGIPELETYLQTVEGVTHSFLAAAPYRAPGQETEGFVVFYSPTFDLDSEDAPAKLFATHRALRDVSVKLITLPPQQIIPIPINQMEKTTLGKLSRARLVNLLKQGELAKHIDRAEELVSIARGASFVAPSTETEKTLAGIYAGIFNLSVSDMSASENFFELGGTSIDVIRLKREGESAFDLPEIPTIQILKHPVISSLAKYVDSLISKDASQEEYDPIVPLQLTGNKTPIFMVHPGVGEVLIFVNLAKYFQNERPFYALRARGFEPGHPFFTTMDEMVSCYAAAVKRTQPHGPYAIAGYSYGGVVAFEVAKRLEAMGDEVKFTGLINIPPNIADRMHEIDWTGGMLNLSYFLGLVSKQDANDLAPSMRPLTRKEQLEIVWKLSPPERLVELQLTPEKLDHWVDIAGSLIECGKTYEPGSSVSVLDVFYAIPLRGSKEDWLNKQLKPWAGYSRAEPSYTDVPGQHYTLMDFDHVPGFQKIFRSRLEARGL</sequence>
<evidence type="ECO:0000250" key="1">
    <source>
        <dbReference type="UniProtKB" id="B7STY1"/>
    </source>
</evidence>
<evidence type="ECO:0000255" key="2"/>
<evidence type="ECO:0000255" key="3">
    <source>
        <dbReference type="PROSITE-ProRule" id="PRU00258"/>
    </source>
</evidence>
<evidence type="ECO:0000269" key="4">
    <source>
    </source>
</evidence>
<evidence type="ECO:0000305" key="5"/>
<name>INVA5_PAXIN</name>
<gene>
    <name type="primary">invA5</name>
</gene>
<protein>
    <recommendedName>
        <fullName>Atromentin synthetase invA5</fullName>
        <ecNumber>2.3.1.-</ecNumber>
    </recommendedName>
    <alternativeName>
        <fullName>Nonribosomal peptide synthase-like enzyme invA5</fullName>
        <shortName>NRPS-like</shortName>
    </alternativeName>
</protein>
<accession>A0A0S2E7W7</accession>